<sequence length="462" mass="50171">MAPGRAVAGLLLLAATGLGRPSEGPELAFTEDVLRVFGANQSLSAAQLGRLLERLGAAPQQGALELGQLHFNQCLSAEDIFSLHGFSNVTQITSSNFTAICPAILQQLNFHPCEDPQKHSVKPSFSEVWGYGFLSVTIINLASLLGLILTPLIKKSYFPKILTYFVGLAIGTLFSNAIFQLIPEAFGFNPKIDNYVEKAVAVFGGFYMLFFVERTLKMLLKTYGQNDHTHFRNDDFGSKEKAHQPKTLPLPPVNGVTCYANPAVTEPNGHIHFDTVSVVSLQDGKAESSSCTCLKGPKLSEIGTIAWMITLCDALHNFIDGLAIGASYTLSLLQGLSTSIAILCEEFPHELGDFVILLNAGMSTRQALLFNFLSACSCYVGLAFGILVGNNFAPNIIFALAGGMFLYISLADMFPEMNDMLREKVTGRQTDFTFFMIQNAGMLTGFTAILLITLYAGDIELQ</sequence>
<proteinExistence type="evidence at protein level"/>
<reference key="1">
    <citation type="journal article" date="2004" name="Genome Res.">
        <title>The status, quality, and expansion of the NIH full-length cDNA project: the Mammalian Gene Collection (MGC).</title>
        <authorList>
            <consortium name="The MGC Project Team"/>
        </authorList>
    </citation>
    <scope>NUCLEOTIDE SEQUENCE [LARGE SCALE MRNA]</scope>
    <source>
        <tissue>Liver</tissue>
    </source>
</reference>
<reference key="2">
    <citation type="journal article" date="2012" name="J. Biol. Chem.">
        <title>ZIP8 is an iron and zinc transporter whose cell-surface expression is up-regulated by cellular iron loading.</title>
        <authorList>
            <person name="Wang C.Y."/>
            <person name="Jenkitkasemwong S."/>
            <person name="Duarte S."/>
            <person name="Sparkman B.K."/>
            <person name="Shawki A."/>
            <person name="Mackenzie B."/>
            <person name="Knutson M.D."/>
        </authorList>
    </citation>
    <scope>FUNCTION</scope>
    <scope>TRANSPORTER ACTIVITY</scope>
    <scope>SUBSTRATE SPECIFICITY</scope>
    <scope>BIOPHYSICOCHEMICAL PROPERTIES</scope>
    <scope>SUBUNIT</scope>
    <scope>SUBCELLULAR LOCATION</scope>
    <scope>MUTAGENESIS OF ASN-40; ASN-88 AND ASN-96</scope>
    <scope>TOPOLOGY</scope>
    <scope>GLYCOSYLATION AT ASN-40; ASN-88 AND ASN-96</scope>
</reference>
<organism>
    <name type="scientific">Rattus norvegicus</name>
    <name type="common">Rat</name>
    <dbReference type="NCBI Taxonomy" id="10116"/>
    <lineage>
        <taxon>Eukaryota</taxon>
        <taxon>Metazoa</taxon>
        <taxon>Chordata</taxon>
        <taxon>Craniata</taxon>
        <taxon>Vertebrata</taxon>
        <taxon>Euteleostomi</taxon>
        <taxon>Mammalia</taxon>
        <taxon>Eutheria</taxon>
        <taxon>Euarchontoglires</taxon>
        <taxon>Glires</taxon>
        <taxon>Rodentia</taxon>
        <taxon>Myomorpha</taxon>
        <taxon>Muroidea</taxon>
        <taxon>Muridae</taxon>
        <taxon>Murinae</taxon>
        <taxon>Rattus</taxon>
    </lineage>
</organism>
<keyword id="KW-1003">Cell membrane</keyword>
<keyword id="KW-0325">Glycoprotein</keyword>
<keyword id="KW-0406">Ion transport</keyword>
<keyword id="KW-0458">Lysosome</keyword>
<keyword id="KW-0472">Membrane</keyword>
<keyword id="KW-1185">Reference proteome</keyword>
<keyword id="KW-0732">Signal</keyword>
<keyword id="KW-0769">Symport</keyword>
<keyword id="KW-0812">Transmembrane</keyword>
<keyword id="KW-1133">Transmembrane helix</keyword>
<keyword id="KW-0813">Transport</keyword>
<keyword id="KW-0862">Zinc</keyword>
<keyword id="KW-0864">Zinc transport</keyword>
<evidence type="ECO:0000250" key="1">
    <source>
        <dbReference type="UniProtKB" id="Q91W10"/>
    </source>
</evidence>
<evidence type="ECO:0000250" key="2">
    <source>
        <dbReference type="UniProtKB" id="Q9C0K1"/>
    </source>
</evidence>
<evidence type="ECO:0000255" key="3"/>
<evidence type="ECO:0000269" key="4">
    <source>
    </source>
</evidence>
<evidence type="ECO:0000303" key="5">
    <source>
    </source>
</evidence>
<evidence type="ECO:0000305" key="6"/>
<evidence type="ECO:0000305" key="7">
    <source>
    </source>
</evidence>
<evidence type="ECO:0000312" key="8">
    <source>
        <dbReference type="RGD" id="1308236"/>
    </source>
</evidence>
<comment type="function">
    <text evidence="1 2 4">Electroneutral divalent metal cation:bicarbonate symporter of the plasma membrane mediating the cellular uptake of zinc and manganese, two divalent metal cations important for development, tissue homeostasis and immunity (PubMed:22898811). Transports an electroneutral complex composed of a divalent metal cation and two bicarbonate anions or alternatively a bicarbonate and a selenite anion (PubMed:22898811). Thereby, it also contributes to the cellular uptake of selenium, an essential trace metal and micronutrient (PubMed:22898811). Also imports cadmium a non-essential metal which is cytotoxic and carcinogenic (PubMed:22898811). May also transport iron and cobalt through membranes (PubMed:22898811). Through zinc import, indirectly regulates the metal-dependent transcription factor MTF1 and the expression of some metalloproteases involved in cartilage catabolism and also probably heart development. Also indirectly regulates the expression of proteins involved in cell morphology and cytoskeleton organization. Indirectly controls innate immune function and inflammatory response by regulating zinc cellular uptake which in turn modulates the expression of genes specific of these processes. Protects, for instance, cells from injury and death at the onset of inflammation (By similarity). By regulating zinc influx into monocytes also directly modulates their adhesion to endothelial cells and arteries (By similarity). Reclaims manganese from the bile at the apical membrane of hepatocytes, thereby regulating the activity of the manganese-dependent enzymes through the systemic levels of the nutrient. Also participates in manganese reabsorption in the proximal tubule of the kidney. By mediating the extracellular uptake of manganese by cells of the blood-brain barrier, may also play a role in the transport of the micronutrient to the brain. With manganese cellular uptake also participates in mitochondrial proper function (By similarity). Finally, also probably functions intracellularly, translocating zinc from lysosome to cytosol to indirectly enhance the expression of specific genes during TCR-mediated T cell activation (By similarity).</text>
</comment>
<comment type="catalytic activity">
    <reaction evidence="7">
        <text>Zn(2+)(out) + 2 hydrogencarbonate(out) = Zn(2+)(in) + 2 hydrogencarbonate(in)</text>
        <dbReference type="Rhea" id="RHEA:62252"/>
        <dbReference type="ChEBI" id="CHEBI:17544"/>
        <dbReference type="ChEBI" id="CHEBI:29105"/>
    </reaction>
</comment>
<comment type="catalytic activity">
    <reaction evidence="7">
        <text>selenite(out) + Zn(2+)(out) + hydrogencarbonate(out) = selenite(in) + Zn(2+)(in) + hydrogencarbonate(in)</text>
        <dbReference type="Rhea" id="RHEA:62264"/>
        <dbReference type="ChEBI" id="CHEBI:17544"/>
        <dbReference type="ChEBI" id="CHEBI:18212"/>
        <dbReference type="ChEBI" id="CHEBI:29105"/>
    </reaction>
</comment>
<comment type="catalytic activity">
    <reaction evidence="7">
        <text>Mn(2+)(out) + 2 hydrogencarbonate(out) = Mn(2+)(in) + 2 hydrogencarbonate(in)</text>
        <dbReference type="Rhea" id="RHEA:62260"/>
        <dbReference type="ChEBI" id="CHEBI:17544"/>
        <dbReference type="ChEBI" id="CHEBI:29035"/>
    </reaction>
</comment>
<comment type="catalytic activity">
    <reaction evidence="7">
        <text>Fe(2+)(out) + 2 hydrogencarbonate(out) = Fe(2+)(in) + 2 hydrogencarbonate(in)</text>
        <dbReference type="Rhea" id="RHEA:62368"/>
        <dbReference type="ChEBI" id="CHEBI:17544"/>
        <dbReference type="ChEBI" id="CHEBI:29033"/>
    </reaction>
</comment>
<comment type="catalytic activity">
    <reaction evidence="7">
        <text>Cd(2+)(out) + 2 hydrogencarbonate(out) = Cd(2+)(in) + 2 hydrogencarbonate(in)</text>
        <dbReference type="Rhea" id="RHEA:62256"/>
        <dbReference type="ChEBI" id="CHEBI:17544"/>
        <dbReference type="ChEBI" id="CHEBI:48775"/>
    </reaction>
</comment>
<comment type="catalytic activity">
    <reaction evidence="7">
        <text>Co(2+)(out) + 2 hydrogencarbonate(out) = Co(2+)(in) + 2 hydrogencarbonate(in)</text>
        <dbReference type="Rhea" id="RHEA:73491"/>
        <dbReference type="ChEBI" id="CHEBI:17544"/>
        <dbReference type="ChEBI" id="CHEBI:48828"/>
    </reaction>
</comment>
<comment type="biophysicochemical properties">
    <phDependence>
        <text evidence="4">Optimum pH is 7.5 for iron transport.</text>
    </phDependence>
</comment>
<comment type="subunit">
    <text evidence="4">Homodimer.</text>
</comment>
<comment type="subcellular location">
    <subcellularLocation>
        <location evidence="4">Cell membrane</location>
        <topology evidence="3">Multi-pass membrane protein</topology>
    </subcellularLocation>
    <subcellularLocation>
        <location evidence="2">Lysosome membrane</location>
        <topology evidence="3">Multi-pass membrane protein</topology>
    </subcellularLocation>
    <subcellularLocation>
        <location evidence="2">Apical cell membrane</location>
        <topology evidence="3">Multi-pass membrane protein</topology>
    </subcellularLocation>
    <subcellularLocation>
        <location evidence="2">Basolateral cell membrane</location>
        <topology evidence="3">Multi-pass membrane protein</topology>
    </subcellularLocation>
    <text evidence="2">Localizes to the lysosome of activated T-cells. A large fraction of the protein is found intracellularly in microvascular capillary endothelial cells that constitute the blood-brain barrier. Localized and functional at both apical and basolateral membranes of microvascular capillary endothelial cells that constitute the blood-brain barrier.</text>
</comment>
<comment type="induction">
    <text evidence="4">Up-regulation upon iron or zinc loading increases expression at the plasma membrane (at protein level).</text>
</comment>
<comment type="PTM">
    <text evidence="4">N-glycosylated. N-glycosylation is not required for proper iron and zinc transport.</text>
</comment>
<comment type="similarity">
    <text evidence="6">Belongs to the ZIP transporter (TC 2.A.5) family.</text>
</comment>
<feature type="signal peptide" evidence="3">
    <location>
        <begin position="1"/>
        <end position="19"/>
    </location>
</feature>
<feature type="chain" id="PRO_0000312709" description="Metal cation symporter ZIP8" evidence="3">
    <location>
        <begin position="20"/>
        <end position="462"/>
    </location>
</feature>
<feature type="topological domain" description="Extracellular" evidence="7">
    <location>
        <begin position="20"/>
        <end position="132"/>
    </location>
</feature>
<feature type="transmembrane region" description="Helical" evidence="3">
    <location>
        <begin position="133"/>
        <end position="153"/>
    </location>
</feature>
<feature type="topological domain" description="Cytoplasmic" evidence="7">
    <location>
        <begin position="154"/>
        <end position="160"/>
    </location>
</feature>
<feature type="transmembrane region" description="Helical" evidence="3">
    <location>
        <begin position="161"/>
        <end position="181"/>
    </location>
</feature>
<feature type="topological domain" description="Extracellular" evidence="7">
    <location>
        <begin position="182"/>
        <end position="191"/>
    </location>
</feature>
<feature type="transmembrane region" description="Helical" evidence="3">
    <location>
        <begin position="192"/>
        <end position="212"/>
    </location>
</feature>
<feature type="topological domain" description="Cytoplasmic" evidence="7">
    <location>
        <begin position="213"/>
        <end position="367"/>
    </location>
</feature>
<feature type="transmembrane region" description="Helical" evidence="3">
    <location>
        <begin position="368"/>
        <end position="388"/>
    </location>
</feature>
<feature type="topological domain" description="Extracellular" evidence="7">
    <location>
        <begin position="389"/>
        <end position="390"/>
    </location>
</feature>
<feature type="transmembrane region" description="Helical" evidence="3">
    <location>
        <begin position="391"/>
        <end position="411"/>
    </location>
</feature>
<feature type="topological domain" description="Cytoplasmic" evidence="7">
    <location>
        <begin position="412"/>
        <end position="431"/>
    </location>
</feature>
<feature type="transmembrane region" description="Helical" evidence="3">
    <location>
        <begin position="432"/>
        <end position="452"/>
    </location>
</feature>
<feature type="topological domain" description="Extracellular" evidence="7">
    <location>
        <begin position="453"/>
        <end position="462"/>
    </location>
</feature>
<feature type="short sequence motif" description="XEXPHE-motif" evidence="2">
    <location>
        <begin position="345"/>
        <end position="350"/>
    </location>
</feature>
<feature type="glycosylation site" description="N-linked (GlcNAc...) asparagine" evidence="4">
    <location>
        <position position="40"/>
    </location>
</feature>
<feature type="glycosylation site" description="N-linked (GlcNAc...) asparagine" evidence="4">
    <location>
        <position position="88"/>
    </location>
</feature>
<feature type="glycosylation site" description="N-linked (GlcNAc...) asparagine" evidence="4">
    <location>
        <position position="96"/>
    </location>
</feature>
<feature type="mutagenesis site" description="Decreased glycosylation." evidence="4">
    <original>N</original>
    <variation>D</variation>
    <location>
        <position position="40"/>
    </location>
</feature>
<feature type="mutagenesis site" description="Decreased glycosylation." evidence="4">
    <original>N</original>
    <variation>Q</variation>
    <location>
        <position position="88"/>
    </location>
</feature>
<feature type="mutagenesis site" description="Decreased glycosylation." evidence="4">
    <original>N</original>
    <variation>Q</variation>
    <location>
        <position position="96"/>
    </location>
</feature>
<dbReference type="EMBL" id="BC089844">
    <property type="protein sequence ID" value="AAH89844.1"/>
    <property type="molecule type" value="mRNA"/>
</dbReference>
<dbReference type="RefSeq" id="NP_001011952.1">
    <property type="nucleotide sequence ID" value="NM_001011952.1"/>
</dbReference>
<dbReference type="RefSeq" id="XP_006233418.1">
    <property type="nucleotide sequence ID" value="XM_006233356.4"/>
</dbReference>
<dbReference type="RefSeq" id="XP_006233419.1">
    <property type="nucleotide sequence ID" value="XM_006233357.4"/>
</dbReference>
<dbReference type="RefSeq" id="XP_017446276.1">
    <property type="nucleotide sequence ID" value="XM_017590787.3"/>
</dbReference>
<dbReference type="RefSeq" id="XP_038958030.1">
    <property type="nucleotide sequence ID" value="XM_039102102.2"/>
</dbReference>
<dbReference type="RefSeq" id="XP_038958032.1">
    <property type="nucleotide sequence ID" value="XM_039102104.2"/>
</dbReference>
<dbReference type="FunCoup" id="Q5FVQ0">
    <property type="interactions" value="287"/>
</dbReference>
<dbReference type="STRING" id="10116.ENSRNOP00000030977"/>
<dbReference type="GlyCosmos" id="Q5FVQ0">
    <property type="glycosylation" value="3 sites, No reported glycans"/>
</dbReference>
<dbReference type="GlyGen" id="Q5FVQ0">
    <property type="glycosylation" value="3 sites"/>
</dbReference>
<dbReference type="iPTMnet" id="Q5FVQ0"/>
<dbReference type="PhosphoSitePlus" id="Q5FVQ0"/>
<dbReference type="PaxDb" id="10116-ENSRNOP00000030977"/>
<dbReference type="Ensembl" id="ENSRNOT00000033413.6">
    <property type="protein sequence ID" value="ENSRNOP00000030977.4"/>
    <property type="gene ID" value="ENSRNOG00000012508.7"/>
</dbReference>
<dbReference type="GeneID" id="295455"/>
<dbReference type="KEGG" id="rno:295455"/>
<dbReference type="AGR" id="RGD:1308236"/>
<dbReference type="CTD" id="64116"/>
<dbReference type="RGD" id="1308236">
    <property type="gene designation" value="Slc39a8"/>
</dbReference>
<dbReference type="eggNOG" id="KOG2693">
    <property type="taxonomic scope" value="Eukaryota"/>
</dbReference>
<dbReference type="GeneTree" id="ENSGT00940000158926"/>
<dbReference type="HOGENOM" id="CLU_015114_13_0_1"/>
<dbReference type="InParanoid" id="Q5FVQ0"/>
<dbReference type="OMA" id="ITMFAGE"/>
<dbReference type="OrthoDB" id="200954at2759"/>
<dbReference type="PhylomeDB" id="Q5FVQ0"/>
<dbReference type="TreeFam" id="TF318470"/>
<dbReference type="Reactome" id="R-RNO-442380">
    <property type="pathway name" value="Zinc influx into cells by the SLC39 gene family"/>
</dbReference>
<dbReference type="PRO" id="PR:Q5FVQ0"/>
<dbReference type="Proteomes" id="UP000002494">
    <property type="component" value="Chromosome 2"/>
</dbReference>
<dbReference type="Bgee" id="ENSRNOG00000012508">
    <property type="expression patterns" value="Expressed in liver and 18 other cell types or tissues"/>
</dbReference>
<dbReference type="GO" id="GO:0016324">
    <property type="term" value="C:apical plasma membrane"/>
    <property type="evidence" value="ECO:0000250"/>
    <property type="project" value="UniProtKB"/>
</dbReference>
<dbReference type="GO" id="GO:0016323">
    <property type="term" value="C:basolateral plasma membrane"/>
    <property type="evidence" value="ECO:0000250"/>
    <property type="project" value="UniProtKB"/>
</dbReference>
<dbReference type="GO" id="GO:0005765">
    <property type="term" value="C:lysosomal membrane"/>
    <property type="evidence" value="ECO:0000250"/>
    <property type="project" value="UniProtKB"/>
</dbReference>
<dbReference type="GO" id="GO:0031090">
    <property type="term" value="C:organelle membrane"/>
    <property type="evidence" value="ECO:0000250"/>
    <property type="project" value="UniProtKB"/>
</dbReference>
<dbReference type="GO" id="GO:0005886">
    <property type="term" value="C:plasma membrane"/>
    <property type="evidence" value="ECO:0000314"/>
    <property type="project" value="UniProtKB"/>
</dbReference>
<dbReference type="GO" id="GO:0140410">
    <property type="term" value="F:monoatomic cation:bicarbonate symporter activity"/>
    <property type="evidence" value="ECO:0000314"/>
    <property type="project" value="UniProtKB"/>
</dbReference>
<dbReference type="GO" id="GO:0005385">
    <property type="term" value="F:zinc ion transmembrane transporter activity"/>
    <property type="evidence" value="ECO:0000318"/>
    <property type="project" value="GO_Central"/>
</dbReference>
<dbReference type="GO" id="GO:0140412">
    <property type="term" value="F:zinc:bicarbonate symporter activity"/>
    <property type="evidence" value="ECO:0000314"/>
    <property type="project" value="UniProtKB"/>
</dbReference>
<dbReference type="GO" id="GO:0006525">
    <property type="term" value="P:arginine metabolic process"/>
    <property type="evidence" value="ECO:0000250"/>
    <property type="project" value="UniProtKB"/>
</dbReference>
<dbReference type="GO" id="GO:0015701">
    <property type="term" value="P:bicarbonate transport"/>
    <property type="evidence" value="ECO:0000250"/>
    <property type="project" value="UniProtKB"/>
</dbReference>
<dbReference type="GO" id="GO:0070574">
    <property type="term" value="P:cadmium ion transmembrane transport"/>
    <property type="evidence" value="ECO:0000314"/>
    <property type="project" value="UniProtKB"/>
</dbReference>
<dbReference type="GO" id="GO:1990079">
    <property type="term" value="P:cartilage homeostasis"/>
    <property type="evidence" value="ECO:0000250"/>
    <property type="project" value="UniProtKB"/>
</dbReference>
<dbReference type="GO" id="GO:0098849">
    <property type="term" value="P:cellular detoxification of cadmium ion"/>
    <property type="evidence" value="ECO:0000250"/>
    <property type="project" value="UniProtKB"/>
</dbReference>
<dbReference type="GO" id="GO:0006824">
    <property type="term" value="P:cobalt ion transport"/>
    <property type="evidence" value="ECO:0000314"/>
    <property type="project" value="UniProtKB"/>
</dbReference>
<dbReference type="GO" id="GO:0006351">
    <property type="term" value="P:DNA-templated transcription"/>
    <property type="evidence" value="ECO:0000266"/>
    <property type="project" value="RGD"/>
</dbReference>
<dbReference type="GO" id="GO:0030198">
    <property type="term" value="P:extracellular matrix organization"/>
    <property type="evidence" value="ECO:0000250"/>
    <property type="project" value="UniProtKB"/>
</dbReference>
<dbReference type="GO" id="GO:0030026">
    <property type="term" value="P:intracellular manganese ion homeostasis"/>
    <property type="evidence" value="ECO:0000250"/>
    <property type="project" value="UniProtKB"/>
</dbReference>
<dbReference type="GO" id="GO:0030003">
    <property type="term" value="P:intracellular monoatomic cation homeostasis"/>
    <property type="evidence" value="ECO:0000318"/>
    <property type="project" value="GO_Central"/>
</dbReference>
<dbReference type="GO" id="GO:0006882">
    <property type="term" value="P:intracellular zinc ion homeostasis"/>
    <property type="evidence" value="ECO:0000250"/>
    <property type="project" value="UniProtKB"/>
</dbReference>
<dbReference type="GO" id="GO:0098711">
    <property type="term" value="P:iron ion import across plasma membrane"/>
    <property type="evidence" value="ECO:0000314"/>
    <property type="project" value="UniProtKB"/>
</dbReference>
<dbReference type="GO" id="GO:0061757">
    <property type="term" value="P:leukocyte adhesion to arterial endothelial cell"/>
    <property type="evidence" value="ECO:0000250"/>
    <property type="project" value="UniProtKB"/>
</dbReference>
<dbReference type="GO" id="GO:0071421">
    <property type="term" value="P:manganese ion transmembrane transport"/>
    <property type="evidence" value="ECO:0000314"/>
    <property type="project" value="UniProtKB"/>
</dbReference>
<dbReference type="GO" id="GO:0015694">
    <property type="term" value="P:mercury ion transport"/>
    <property type="evidence" value="ECO:0000266"/>
    <property type="project" value="RGD"/>
</dbReference>
<dbReference type="GO" id="GO:1990540">
    <property type="term" value="P:mitochondrial manganese ion transmembrane transport"/>
    <property type="evidence" value="ECO:0000250"/>
    <property type="project" value="UniProtKB"/>
</dbReference>
<dbReference type="GO" id="GO:0043124">
    <property type="term" value="P:negative regulation of canonical NF-kappaB signal transduction"/>
    <property type="evidence" value="ECO:0000266"/>
    <property type="project" value="RGD"/>
</dbReference>
<dbReference type="GO" id="GO:0050728">
    <property type="term" value="P:negative regulation of inflammatory response"/>
    <property type="evidence" value="ECO:0000266"/>
    <property type="project" value="RGD"/>
</dbReference>
<dbReference type="GO" id="GO:0097080">
    <property type="term" value="P:plasma membrane selenite transport"/>
    <property type="evidence" value="ECO:0000266"/>
    <property type="project" value="RGD"/>
</dbReference>
<dbReference type="GO" id="GO:0006487">
    <property type="term" value="P:protein N-linked glycosylation"/>
    <property type="evidence" value="ECO:0000250"/>
    <property type="project" value="UniProtKB"/>
</dbReference>
<dbReference type="GO" id="GO:0006355">
    <property type="term" value="P:regulation of DNA-templated transcription"/>
    <property type="evidence" value="ECO:0000250"/>
    <property type="project" value="UniProtKB"/>
</dbReference>
<dbReference type="GO" id="GO:0042391">
    <property type="term" value="P:regulation of membrane potential"/>
    <property type="evidence" value="ECO:0000250"/>
    <property type="project" value="UniProtKB"/>
</dbReference>
<dbReference type="GO" id="GO:0071578">
    <property type="term" value="P:zinc ion import across plasma membrane"/>
    <property type="evidence" value="ECO:0000314"/>
    <property type="project" value="UniProtKB"/>
</dbReference>
<dbReference type="GO" id="GO:0071577">
    <property type="term" value="P:zinc ion transmembrane transport"/>
    <property type="evidence" value="ECO:0000266"/>
    <property type="project" value="RGD"/>
</dbReference>
<dbReference type="GO" id="GO:0006829">
    <property type="term" value="P:zinc ion transport"/>
    <property type="evidence" value="ECO:0000250"/>
    <property type="project" value="UniProtKB"/>
</dbReference>
<dbReference type="InterPro" id="IPR003689">
    <property type="entry name" value="ZIP"/>
</dbReference>
<dbReference type="InterPro" id="IPR050799">
    <property type="entry name" value="ZIP_Transporter"/>
</dbReference>
<dbReference type="PANTHER" id="PTHR12191:SF2">
    <property type="entry name" value="METAL CATION SYMPORTER ZIP8"/>
    <property type="match status" value="1"/>
</dbReference>
<dbReference type="PANTHER" id="PTHR12191">
    <property type="entry name" value="SOLUTE CARRIER FAMILY 39"/>
    <property type="match status" value="1"/>
</dbReference>
<dbReference type="Pfam" id="PF02535">
    <property type="entry name" value="Zip"/>
    <property type="match status" value="1"/>
</dbReference>
<accession>Q5FVQ0</accession>
<protein>
    <recommendedName>
        <fullName evidence="7">Metal cation symporter ZIP8</fullName>
    </recommendedName>
    <alternativeName>
        <fullName evidence="8">Solute carrier family 39 member 8</fullName>
    </alternativeName>
    <alternativeName>
        <fullName evidence="1">Zrt- and Irt-like protein 8</fullName>
        <shortName evidence="1">ZIP-8</shortName>
    </alternativeName>
</protein>
<gene>
    <name evidence="8" type="primary">Slc39a8</name>
    <name evidence="5" type="synonym">Zip8</name>
</gene>
<name>S39A8_RAT</name>